<evidence type="ECO:0000255" key="1">
    <source>
        <dbReference type="HAMAP-Rule" id="MF_00537"/>
    </source>
</evidence>
<evidence type="ECO:0000305" key="2"/>
<feature type="chain" id="PRO_0000269050" description="Small ribosomal subunit protein uS14">
    <location>
        <begin position="1"/>
        <end position="101"/>
    </location>
</feature>
<sequence>MAKKSMIQRELKREKLVAKYAQKRAEFKAIILDINSTEEQIWEAQIKLQKLPVNSSASRVQRRCKVTGRPHAVYRKFGLCRNKLREYAMAGDVPGLKKASW</sequence>
<comment type="function">
    <text evidence="1">Binds 16S rRNA, required for the assembly of 30S particles and may also be responsible for determining the conformation of the 16S rRNA at the A site.</text>
</comment>
<comment type="subunit">
    <text evidence="1">Part of the 30S ribosomal subunit. Contacts proteins S3 and S10.</text>
</comment>
<comment type="similarity">
    <text evidence="1">Belongs to the universal ribosomal protein uS14 family.</text>
</comment>
<keyword id="KW-0687">Ribonucleoprotein</keyword>
<keyword id="KW-0689">Ribosomal protein</keyword>
<keyword id="KW-0694">RNA-binding</keyword>
<keyword id="KW-0699">rRNA-binding</keyword>
<organism>
    <name type="scientific">Francisella tularensis subsp. tularensis (strain FSC 198)</name>
    <dbReference type="NCBI Taxonomy" id="393115"/>
    <lineage>
        <taxon>Bacteria</taxon>
        <taxon>Pseudomonadati</taxon>
        <taxon>Pseudomonadota</taxon>
        <taxon>Gammaproteobacteria</taxon>
        <taxon>Thiotrichales</taxon>
        <taxon>Francisellaceae</taxon>
        <taxon>Francisella</taxon>
    </lineage>
</organism>
<name>RS14_FRAT1</name>
<dbReference type="EMBL" id="AM286280">
    <property type="protein sequence ID" value="CAL08354.1"/>
    <property type="molecule type" value="Genomic_DNA"/>
</dbReference>
<dbReference type="RefSeq" id="WP_003014354.1">
    <property type="nucleotide sequence ID" value="NC_008245.1"/>
</dbReference>
<dbReference type="SMR" id="Q14JA7"/>
<dbReference type="KEGG" id="ftf:FTF0338"/>
<dbReference type="HOGENOM" id="CLU_139869_0_1_6"/>
<dbReference type="GO" id="GO:0005737">
    <property type="term" value="C:cytoplasm"/>
    <property type="evidence" value="ECO:0007669"/>
    <property type="project" value="UniProtKB-ARBA"/>
</dbReference>
<dbReference type="GO" id="GO:0015935">
    <property type="term" value="C:small ribosomal subunit"/>
    <property type="evidence" value="ECO:0007669"/>
    <property type="project" value="TreeGrafter"/>
</dbReference>
<dbReference type="GO" id="GO:0019843">
    <property type="term" value="F:rRNA binding"/>
    <property type="evidence" value="ECO:0007669"/>
    <property type="project" value="UniProtKB-UniRule"/>
</dbReference>
<dbReference type="GO" id="GO:0003735">
    <property type="term" value="F:structural constituent of ribosome"/>
    <property type="evidence" value="ECO:0007669"/>
    <property type="project" value="InterPro"/>
</dbReference>
<dbReference type="GO" id="GO:0006412">
    <property type="term" value="P:translation"/>
    <property type="evidence" value="ECO:0007669"/>
    <property type="project" value="UniProtKB-UniRule"/>
</dbReference>
<dbReference type="FunFam" id="1.10.287.1480:FF:000001">
    <property type="entry name" value="30S ribosomal protein S14"/>
    <property type="match status" value="1"/>
</dbReference>
<dbReference type="Gene3D" id="1.10.287.1480">
    <property type="match status" value="1"/>
</dbReference>
<dbReference type="HAMAP" id="MF_00537">
    <property type="entry name" value="Ribosomal_uS14_1"/>
    <property type="match status" value="1"/>
</dbReference>
<dbReference type="InterPro" id="IPR001209">
    <property type="entry name" value="Ribosomal_uS14"/>
</dbReference>
<dbReference type="InterPro" id="IPR023036">
    <property type="entry name" value="Ribosomal_uS14_bac/plastid"/>
</dbReference>
<dbReference type="InterPro" id="IPR018271">
    <property type="entry name" value="Ribosomal_uS14_CS"/>
</dbReference>
<dbReference type="NCBIfam" id="NF006477">
    <property type="entry name" value="PRK08881.1"/>
    <property type="match status" value="1"/>
</dbReference>
<dbReference type="PANTHER" id="PTHR19836">
    <property type="entry name" value="30S RIBOSOMAL PROTEIN S14"/>
    <property type="match status" value="1"/>
</dbReference>
<dbReference type="PANTHER" id="PTHR19836:SF19">
    <property type="entry name" value="SMALL RIBOSOMAL SUBUNIT PROTEIN US14M"/>
    <property type="match status" value="1"/>
</dbReference>
<dbReference type="Pfam" id="PF00253">
    <property type="entry name" value="Ribosomal_S14"/>
    <property type="match status" value="1"/>
</dbReference>
<dbReference type="SUPFAM" id="SSF57716">
    <property type="entry name" value="Glucocorticoid receptor-like (DNA-binding domain)"/>
    <property type="match status" value="1"/>
</dbReference>
<dbReference type="PROSITE" id="PS00527">
    <property type="entry name" value="RIBOSOMAL_S14"/>
    <property type="match status" value="1"/>
</dbReference>
<reference key="1">
    <citation type="journal article" date="2007" name="PLoS ONE">
        <title>Genome sequencing shows that European isolates of Francisella tularensis subspecies tularensis are almost identical to US laboratory strain Schu S4.</title>
        <authorList>
            <person name="Chaudhuri R.R."/>
            <person name="Ren C.-P."/>
            <person name="Desmond L."/>
            <person name="Vincent G.A."/>
            <person name="Silman N.J."/>
            <person name="Brehm J.K."/>
            <person name="Elmore M.J."/>
            <person name="Hudson M.J."/>
            <person name="Forsman M."/>
            <person name="Isherwood K.E."/>
            <person name="Gurycova D."/>
            <person name="Minton N.P."/>
            <person name="Titball R.W."/>
            <person name="Pallen M.J."/>
            <person name="Vipond R."/>
        </authorList>
    </citation>
    <scope>NUCLEOTIDE SEQUENCE [LARGE SCALE GENOMIC DNA]</scope>
    <source>
        <strain>FSC 198</strain>
    </source>
</reference>
<accession>Q14JA7</accession>
<gene>
    <name evidence="1" type="primary">rpsN</name>
    <name type="ordered locus">FTF0338</name>
</gene>
<protein>
    <recommendedName>
        <fullName evidence="1">Small ribosomal subunit protein uS14</fullName>
    </recommendedName>
    <alternativeName>
        <fullName evidence="2">30S ribosomal protein S14</fullName>
    </alternativeName>
</protein>
<proteinExistence type="inferred from homology"/>